<dbReference type="EC" id="3.4.21.-"/>
<dbReference type="EMBL" id="FJ348236">
    <property type="protein sequence ID" value="ACL37326.1"/>
    <property type="molecule type" value="Genomic_DNA"/>
</dbReference>
<dbReference type="SMR" id="B8XGQ4"/>
<dbReference type="MEROPS" id="S08.025"/>
<dbReference type="GlyCosmos" id="B8XGQ4">
    <property type="glycosylation" value="1 site, No reported glycans"/>
</dbReference>
<dbReference type="VEuPathDB" id="FungiDB:TESG_01096"/>
<dbReference type="GO" id="GO:0005576">
    <property type="term" value="C:extracellular region"/>
    <property type="evidence" value="ECO:0007669"/>
    <property type="project" value="UniProtKB-SubCell"/>
</dbReference>
<dbReference type="GO" id="GO:0004252">
    <property type="term" value="F:serine-type endopeptidase activity"/>
    <property type="evidence" value="ECO:0007669"/>
    <property type="project" value="InterPro"/>
</dbReference>
<dbReference type="GO" id="GO:0006508">
    <property type="term" value="P:proteolysis"/>
    <property type="evidence" value="ECO:0007669"/>
    <property type="project" value="UniProtKB-KW"/>
</dbReference>
<dbReference type="CDD" id="cd04077">
    <property type="entry name" value="Peptidases_S8_PCSK9_ProteinaseK_like"/>
    <property type="match status" value="1"/>
</dbReference>
<dbReference type="FunFam" id="3.40.50.200:FF:000014">
    <property type="entry name" value="Proteinase K"/>
    <property type="match status" value="1"/>
</dbReference>
<dbReference type="Gene3D" id="3.30.70.80">
    <property type="entry name" value="Peptidase S8 propeptide/proteinase inhibitor I9"/>
    <property type="match status" value="1"/>
</dbReference>
<dbReference type="Gene3D" id="3.40.50.200">
    <property type="entry name" value="Peptidase S8/S53 domain"/>
    <property type="match status" value="1"/>
</dbReference>
<dbReference type="InterPro" id="IPR034193">
    <property type="entry name" value="PCSK9_ProteinaseK-like"/>
</dbReference>
<dbReference type="InterPro" id="IPR000209">
    <property type="entry name" value="Peptidase_S8/S53_dom"/>
</dbReference>
<dbReference type="InterPro" id="IPR036852">
    <property type="entry name" value="Peptidase_S8/S53_dom_sf"/>
</dbReference>
<dbReference type="InterPro" id="IPR023828">
    <property type="entry name" value="Peptidase_S8_Ser-AS"/>
</dbReference>
<dbReference type="InterPro" id="IPR050131">
    <property type="entry name" value="Peptidase_S8_subtilisin-like"/>
</dbReference>
<dbReference type="InterPro" id="IPR015500">
    <property type="entry name" value="Peptidase_S8_subtilisin-rel"/>
</dbReference>
<dbReference type="InterPro" id="IPR010259">
    <property type="entry name" value="S8pro/Inhibitor_I9"/>
</dbReference>
<dbReference type="InterPro" id="IPR037045">
    <property type="entry name" value="S8pro/Inhibitor_I9_sf"/>
</dbReference>
<dbReference type="PANTHER" id="PTHR43806:SF58">
    <property type="entry name" value="ALKALINE PROTEASE 1-RELATED"/>
    <property type="match status" value="1"/>
</dbReference>
<dbReference type="PANTHER" id="PTHR43806">
    <property type="entry name" value="PEPTIDASE S8"/>
    <property type="match status" value="1"/>
</dbReference>
<dbReference type="Pfam" id="PF05922">
    <property type="entry name" value="Inhibitor_I9"/>
    <property type="match status" value="1"/>
</dbReference>
<dbReference type="Pfam" id="PF00082">
    <property type="entry name" value="Peptidase_S8"/>
    <property type="match status" value="1"/>
</dbReference>
<dbReference type="PRINTS" id="PR00723">
    <property type="entry name" value="SUBTILISIN"/>
</dbReference>
<dbReference type="SUPFAM" id="SSF54897">
    <property type="entry name" value="Protease propeptides/inhibitors"/>
    <property type="match status" value="1"/>
</dbReference>
<dbReference type="SUPFAM" id="SSF52743">
    <property type="entry name" value="Subtilisin-like"/>
    <property type="match status" value="1"/>
</dbReference>
<dbReference type="PROSITE" id="PS51892">
    <property type="entry name" value="SUBTILASE"/>
    <property type="match status" value="1"/>
</dbReference>
<dbReference type="PROSITE" id="PS00138">
    <property type="entry name" value="SUBTILASE_SER"/>
    <property type="match status" value="1"/>
</dbReference>
<reference key="1">
    <citation type="submission" date="2008-10" db="EMBL/GenBank/DDBJ databases">
        <title>Comparing putative pathogenicity factors between Trichophyton tonsurans and Trichophyton equinum.</title>
        <authorList>
            <person name="Preuett B.L."/>
            <person name="Abdel-Rahman S.M."/>
        </authorList>
    </citation>
    <scope>NUCLEOTIDE SEQUENCE [GENOMIC DNA]</scope>
</reference>
<keyword id="KW-0325">Glycoprotein</keyword>
<keyword id="KW-0378">Hydrolase</keyword>
<keyword id="KW-0645">Protease</keyword>
<keyword id="KW-0964">Secreted</keyword>
<keyword id="KW-0720">Serine protease</keyword>
<keyword id="KW-0732">Signal</keyword>
<keyword id="KW-0843">Virulence</keyword>
<keyword id="KW-0865">Zymogen</keyword>
<proteinExistence type="inferred from homology"/>
<gene>
    <name type="primary">SUB1</name>
</gene>
<organism>
    <name type="scientific">Trichophyton tonsurans</name>
    <name type="common">Scalp ringworm fungus</name>
    <dbReference type="NCBI Taxonomy" id="34387"/>
    <lineage>
        <taxon>Eukaryota</taxon>
        <taxon>Fungi</taxon>
        <taxon>Dikarya</taxon>
        <taxon>Ascomycota</taxon>
        <taxon>Pezizomycotina</taxon>
        <taxon>Eurotiomycetes</taxon>
        <taxon>Eurotiomycetidae</taxon>
        <taxon>Onygenales</taxon>
        <taxon>Arthrodermataceae</taxon>
        <taxon>Trichophyton</taxon>
    </lineage>
</organism>
<protein>
    <recommendedName>
        <fullName>Subtilisin-like protease 1</fullName>
        <ecNumber>3.4.21.-</ecNumber>
    </recommendedName>
</protein>
<feature type="signal peptide" evidence="2">
    <location>
        <begin position="1"/>
        <end position="19"/>
    </location>
</feature>
<feature type="propeptide" id="PRO_0000380761" evidence="1">
    <location>
        <begin position="20"/>
        <end position="116"/>
    </location>
</feature>
<feature type="chain" id="PRO_0000380762" description="Subtilisin-like protease 1">
    <location>
        <begin position="117"/>
        <end position="507"/>
    </location>
</feature>
<feature type="domain" description="Inhibitor I9" evidence="2">
    <location>
        <begin position="34"/>
        <end position="113"/>
    </location>
</feature>
<feature type="domain" description="Peptidase S8" evidence="3">
    <location>
        <begin position="126"/>
        <end position="400"/>
    </location>
</feature>
<feature type="region of interest" description="Disordered" evidence="4">
    <location>
        <begin position="175"/>
        <end position="198"/>
    </location>
</feature>
<feature type="region of interest" description="Disordered" evidence="4">
    <location>
        <begin position="282"/>
        <end position="312"/>
    </location>
</feature>
<feature type="region of interest" description="Disordered" evidence="4">
    <location>
        <begin position="378"/>
        <end position="486"/>
    </location>
</feature>
<feature type="compositionally biased region" description="Polar residues" evidence="4">
    <location>
        <begin position="282"/>
        <end position="294"/>
    </location>
</feature>
<feature type="compositionally biased region" description="Polar residues" evidence="4">
    <location>
        <begin position="378"/>
        <end position="394"/>
    </location>
</feature>
<feature type="compositionally biased region" description="Pro residues" evidence="4">
    <location>
        <begin position="405"/>
        <end position="428"/>
    </location>
</feature>
<feature type="compositionally biased region" description="Pro residues" evidence="4">
    <location>
        <begin position="438"/>
        <end position="449"/>
    </location>
</feature>
<feature type="compositionally biased region" description="Low complexity" evidence="4">
    <location>
        <begin position="450"/>
        <end position="461"/>
    </location>
</feature>
<feature type="compositionally biased region" description="Pro residues" evidence="4">
    <location>
        <begin position="462"/>
        <end position="476"/>
    </location>
</feature>
<feature type="active site" description="Charge relay system" evidence="3">
    <location>
        <position position="158"/>
    </location>
</feature>
<feature type="active site" description="Charge relay system" evidence="3">
    <location>
        <position position="190"/>
    </location>
</feature>
<feature type="active site" description="Charge relay system" evidence="3">
    <location>
        <position position="345"/>
    </location>
</feature>
<feature type="glycosylation site" description="N-linked (GlcNAc...) asparagine" evidence="2">
    <location>
        <position position="251"/>
    </location>
</feature>
<accession>B8XGQ4</accession>
<name>SUB1_TRITO</name>
<evidence type="ECO:0000250" key="1"/>
<evidence type="ECO:0000255" key="2"/>
<evidence type="ECO:0000255" key="3">
    <source>
        <dbReference type="PROSITE-ProRule" id="PRU01240"/>
    </source>
</evidence>
<evidence type="ECO:0000256" key="4">
    <source>
        <dbReference type="SAM" id="MobiDB-lite"/>
    </source>
</evidence>
<evidence type="ECO:0000305" key="5"/>
<comment type="function">
    <text evidence="1">Secreted subtilisin-like serine protease with keratinolytic activity that contributes to pathogenicity.</text>
</comment>
<comment type="subcellular location">
    <subcellularLocation>
        <location evidence="1">Secreted</location>
    </subcellularLocation>
</comment>
<comment type="similarity">
    <text evidence="5">Belongs to the peptidase S8 family.</text>
</comment>
<sequence length="507" mass="53080">MGVFRFISISLAAVSAANAAQILSMPHAQTVPHSYIVMMKDDTSDDDFNHHQSWLQSTHTHNITRRATIQNAGMRHKYNFRKMKGYSGIFDEETIKDIAKDPKVMFVEPDTIISVNGKVEQSNVPSWGLARISNSQPGANSYVYDSSAGEGITVYSVDTGVDINHEDFEGRAIWGSNQVNDGDDRDGSGHGTHTSGTMVGKEFGIAKKAKLVAVKVLGNDGSGPTSGIVAGINWCVEHARQNGGTDKAVMNMSLGGSSSSALNRAAAQAVEQGMFLSVAAGNENQDARSSSPASEPSVCTVGSSAEDDSRSSFSNWGPALDLFAPGSNIISARPGGGSQSMSGTSMAAPHVAGLAAYLMALEGISGGAVCDRLKELGSSSITDVGPGTPTNVLISNGGAKGGNPKPAPGPSPNPSQPSEPQQPAPSQPGEPGESFPGEPFPGEPFPGEPFPGESSPGESAPAPAPMPPSPQHPHTPYPGGDNFDFDGYWKKYFGGEHWRKMFGSFWN</sequence>